<evidence type="ECO:0000255" key="1">
    <source>
        <dbReference type="HAMAP-Rule" id="MF_01576"/>
    </source>
</evidence>
<feature type="chain" id="PRO_0000268463" description="Bifunctional protein FolD 1">
    <location>
        <begin position="1"/>
        <end position="299"/>
    </location>
</feature>
<feature type="binding site" evidence="1">
    <location>
        <begin position="168"/>
        <end position="170"/>
    </location>
    <ligand>
        <name>NADP(+)</name>
        <dbReference type="ChEBI" id="CHEBI:58349"/>
    </ligand>
</feature>
<feature type="binding site" evidence="1">
    <location>
        <position position="193"/>
    </location>
    <ligand>
        <name>NADP(+)</name>
        <dbReference type="ChEBI" id="CHEBI:58349"/>
    </ligand>
</feature>
<feature type="binding site" evidence="1">
    <location>
        <position position="234"/>
    </location>
    <ligand>
        <name>NADP(+)</name>
        <dbReference type="ChEBI" id="CHEBI:58349"/>
    </ligand>
</feature>
<gene>
    <name evidence="1" type="primary">folD1</name>
    <name type="ordered locus">mlr6508</name>
</gene>
<proteinExistence type="inferred from homology"/>
<keyword id="KW-0028">Amino-acid biosynthesis</keyword>
<keyword id="KW-0368">Histidine biosynthesis</keyword>
<keyword id="KW-0378">Hydrolase</keyword>
<keyword id="KW-0486">Methionine biosynthesis</keyword>
<keyword id="KW-0511">Multifunctional enzyme</keyword>
<keyword id="KW-0521">NADP</keyword>
<keyword id="KW-0554">One-carbon metabolism</keyword>
<keyword id="KW-0560">Oxidoreductase</keyword>
<keyword id="KW-0658">Purine biosynthesis</keyword>
<protein>
    <recommendedName>
        <fullName evidence="1">Bifunctional protein FolD 1</fullName>
    </recommendedName>
    <domain>
        <recommendedName>
            <fullName evidence="1">Methylenetetrahydrofolate dehydrogenase</fullName>
            <ecNumber evidence="1">1.5.1.5</ecNumber>
        </recommendedName>
    </domain>
    <domain>
        <recommendedName>
            <fullName evidence="1">Methenyltetrahydrofolate cyclohydrolase</fullName>
            <ecNumber evidence="1">3.5.4.9</ecNumber>
        </recommendedName>
    </domain>
</protein>
<reference key="1">
    <citation type="journal article" date="2000" name="DNA Res.">
        <title>Complete genome structure of the nitrogen-fixing symbiotic bacterium Mesorhizobium loti.</title>
        <authorList>
            <person name="Kaneko T."/>
            <person name="Nakamura Y."/>
            <person name="Sato S."/>
            <person name="Asamizu E."/>
            <person name="Kato T."/>
            <person name="Sasamoto S."/>
            <person name="Watanabe A."/>
            <person name="Idesawa K."/>
            <person name="Ishikawa A."/>
            <person name="Kawashima K."/>
            <person name="Kimura T."/>
            <person name="Kishida Y."/>
            <person name="Kiyokawa C."/>
            <person name="Kohara M."/>
            <person name="Matsumoto M."/>
            <person name="Matsuno A."/>
            <person name="Mochizuki Y."/>
            <person name="Nakayama S."/>
            <person name="Nakazaki N."/>
            <person name="Shimpo S."/>
            <person name="Sugimoto M."/>
            <person name="Takeuchi C."/>
            <person name="Yamada M."/>
            <person name="Tabata S."/>
        </authorList>
    </citation>
    <scope>NUCLEOTIDE SEQUENCE [LARGE SCALE GENOMIC DNA]</scope>
    <source>
        <strain>LMG 29417 / CECT 9101 / MAFF 303099</strain>
    </source>
</reference>
<sequence>MAEVIDGKSVAEDVVRTVKALTAELVAKGKAKPGLAVVIVGEDPASQVYVASKSRTAKECGFHSLQHTLPAETSEEALLKIIADLNADPAVNGILVQLPLPAHIDAGKIIQAIAPQKDVDGFHFINVGKLGTGELDTAFVPCTPAGSMLLIQRVRGKDLSGLNAVVVGRSNIVGKPMANLLLAANCTVTIAHSRTKDLPALARTADILVAAVGRPEMIKGDWVKPGATVIDVGINRIPAPEKGEGKSRLVGDVAYAEAARQAGAITPVPGGVGPMTIAMLMANTLASAYLAAGLKRPTF</sequence>
<name>FOLD1_RHILO</name>
<dbReference type="EC" id="1.5.1.5" evidence="1"/>
<dbReference type="EC" id="3.5.4.9" evidence="1"/>
<dbReference type="EMBL" id="BA000012">
    <property type="protein sequence ID" value="BAB52790.1"/>
    <property type="molecule type" value="Genomic_DNA"/>
</dbReference>
<dbReference type="RefSeq" id="WP_010914104.1">
    <property type="nucleotide sequence ID" value="NC_002678.2"/>
</dbReference>
<dbReference type="SMR" id="Q989A7"/>
<dbReference type="KEGG" id="mlo:mlr6508"/>
<dbReference type="PATRIC" id="fig|266835.9.peg.5167"/>
<dbReference type="eggNOG" id="COG0190">
    <property type="taxonomic scope" value="Bacteria"/>
</dbReference>
<dbReference type="HOGENOM" id="CLU_034045_1_2_5"/>
<dbReference type="UniPathway" id="UPA00193"/>
<dbReference type="Proteomes" id="UP000000552">
    <property type="component" value="Chromosome"/>
</dbReference>
<dbReference type="GO" id="GO:0005829">
    <property type="term" value="C:cytosol"/>
    <property type="evidence" value="ECO:0007669"/>
    <property type="project" value="TreeGrafter"/>
</dbReference>
<dbReference type="GO" id="GO:0004477">
    <property type="term" value="F:methenyltetrahydrofolate cyclohydrolase activity"/>
    <property type="evidence" value="ECO:0007669"/>
    <property type="project" value="UniProtKB-UniRule"/>
</dbReference>
<dbReference type="GO" id="GO:0004488">
    <property type="term" value="F:methylenetetrahydrofolate dehydrogenase (NADP+) activity"/>
    <property type="evidence" value="ECO:0007669"/>
    <property type="project" value="UniProtKB-UniRule"/>
</dbReference>
<dbReference type="GO" id="GO:0000105">
    <property type="term" value="P:L-histidine biosynthetic process"/>
    <property type="evidence" value="ECO:0007669"/>
    <property type="project" value="UniProtKB-KW"/>
</dbReference>
<dbReference type="GO" id="GO:0009086">
    <property type="term" value="P:methionine biosynthetic process"/>
    <property type="evidence" value="ECO:0007669"/>
    <property type="project" value="UniProtKB-KW"/>
</dbReference>
<dbReference type="GO" id="GO:0006164">
    <property type="term" value="P:purine nucleotide biosynthetic process"/>
    <property type="evidence" value="ECO:0007669"/>
    <property type="project" value="UniProtKB-KW"/>
</dbReference>
<dbReference type="GO" id="GO:0035999">
    <property type="term" value="P:tetrahydrofolate interconversion"/>
    <property type="evidence" value="ECO:0007669"/>
    <property type="project" value="UniProtKB-UniRule"/>
</dbReference>
<dbReference type="CDD" id="cd01080">
    <property type="entry name" value="NAD_bind_m-THF_DH_Cyclohyd"/>
    <property type="match status" value="1"/>
</dbReference>
<dbReference type="FunFam" id="3.40.50.720:FF:000006">
    <property type="entry name" value="Bifunctional protein FolD"/>
    <property type="match status" value="1"/>
</dbReference>
<dbReference type="FunFam" id="3.40.50.10860:FF:000005">
    <property type="entry name" value="C-1-tetrahydrofolate synthase, cytoplasmic, putative"/>
    <property type="match status" value="1"/>
</dbReference>
<dbReference type="Gene3D" id="3.40.50.10860">
    <property type="entry name" value="Leucine Dehydrogenase, chain A, domain 1"/>
    <property type="match status" value="1"/>
</dbReference>
<dbReference type="Gene3D" id="3.40.50.720">
    <property type="entry name" value="NAD(P)-binding Rossmann-like Domain"/>
    <property type="match status" value="1"/>
</dbReference>
<dbReference type="HAMAP" id="MF_01576">
    <property type="entry name" value="THF_DHG_CYH"/>
    <property type="match status" value="1"/>
</dbReference>
<dbReference type="InterPro" id="IPR046346">
    <property type="entry name" value="Aminoacid_DH-like_N_sf"/>
</dbReference>
<dbReference type="InterPro" id="IPR036291">
    <property type="entry name" value="NAD(P)-bd_dom_sf"/>
</dbReference>
<dbReference type="InterPro" id="IPR000672">
    <property type="entry name" value="THF_DH/CycHdrlase"/>
</dbReference>
<dbReference type="InterPro" id="IPR020630">
    <property type="entry name" value="THF_DH/CycHdrlase_cat_dom"/>
</dbReference>
<dbReference type="InterPro" id="IPR020867">
    <property type="entry name" value="THF_DH/CycHdrlase_CS"/>
</dbReference>
<dbReference type="InterPro" id="IPR020631">
    <property type="entry name" value="THF_DH/CycHdrlase_NAD-bd_dom"/>
</dbReference>
<dbReference type="NCBIfam" id="NF008058">
    <property type="entry name" value="PRK10792.1"/>
    <property type="match status" value="1"/>
</dbReference>
<dbReference type="NCBIfam" id="NF010783">
    <property type="entry name" value="PRK14186.1"/>
    <property type="match status" value="1"/>
</dbReference>
<dbReference type="NCBIfam" id="NF010785">
    <property type="entry name" value="PRK14188.1"/>
    <property type="match status" value="1"/>
</dbReference>
<dbReference type="PANTHER" id="PTHR48099:SF5">
    <property type="entry name" value="C-1-TETRAHYDROFOLATE SYNTHASE, CYTOPLASMIC"/>
    <property type="match status" value="1"/>
</dbReference>
<dbReference type="PANTHER" id="PTHR48099">
    <property type="entry name" value="C-1-TETRAHYDROFOLATE SYNTHASE, CYTOPLASMIC-RELATED"/>
    <property type="match status" value="1"/>
</dbReference>
<dbReference type="Pfam" id="PF00763">
    <property type="entry name" value="THF_DHG_CYH"/>
    <property type="match status" value="1"/>
</dbReference>
<dbReference type="Pfam" id="PF02882">
    <property type="entry name" value="THF_DHG_CYH_C"/>
    <property type="match status" value="1"/>
</dbReference>
<dbReference type="PRINTS" id="PR00085">
    <property type="entry name" value="THFDHDRGNASE"/>
</dbReference>
<dbReference type="SUPFAM" id="SSF53223">
    <property type="entry name" value="Aminoacid dehydrogenase-like, N-terminal domain"/>
    <property type="match status" value="1"/>
</dbReference>
<dbReference type="SUPFAM" id="SSF51735">
    <property type="entry name" value="NAD(P)-binding Rossmann-fold domains"/>
    <property type="match status" value="1"/>
</dbReference>
<dbReference type="PROSITE" id="PS00767">
    <property type="entry name" value="THF_DHG_CYH_2"/>
    <property type="match status" value="1"/>
</dbReference>
<organism>
    <name type="scientific">Mesorhizobium japonicum (strain LMG 29417 / CECT 9101 / MAFF 303099)</name>
    <name type="common">Mesorhizobium loti (strain MAFF 303099)</name>
    <dbReference type="NCBI Taxonomy" id="266835"/>
    <lineage>
        <taxon>Bacteria</taxon>
        <taxon>Pseudomonadati</taxon>
        <taxon>Pseudomonadota</taxon>
        <taxon>Alphaproteobacteria</taxon>
        <taxon>Hyphomicrobiales</taxon>
        <taxon>Phyllobacteriaceae</taxon>
        <taxon>Mesorhizobium</taxon>
    </lineage>
</organism>
<accession>Q989A7</accession>
<comment type="function">
    <text evidence="1">Catalyzes the oxidation of 5,10-methylenetetrahydrofolate to 5,10-methenyltetrahydrofolate and then the hydrolysis of 5,10-methenyltetrahydrofolate to 10-formyltetrahydrofolate.</text>
</comment>
<comment type="catalytic activity">
    <reaction evidence="1">
        <text>(6R)-5,10-methylene-5,6,7,8-tetrahydrofolate + NADP(+) = (6R)-5,10-methenyltetrahydrofolate + NADPH</text>
        <dbReference type="Rhea" id="RHEA:22812"/>
        <dbReference type="ChEBI" id="CHEBI:15636"/>
        <dbReference type="ChEBI" id="CHEBI:57455"/>
        <dbReference type="ChEBI" id="CHEBI:57783"/>
        <dbReference type="ChEBI" id="CHEBI:58349"/>
        <dbReference type="EC" id="1.5.1.5"/>
    </reaction>
</comment>
<comment type="catalytic activity">
    <reaction evidence="1">
        <text>(6R)-5,10-methenyltetrahydrofolate + H2O = (6R)-10-formyltetrahydrofolate + H(+)</text>
        <dbReference type="Rhea" id="RHEA:23700"/>
        <dbReference type="ChEBI" id="CHEBI:15377"/>
        <dbReference type="ChEBI" id="CHEBI:15378"/>
        <dbReference type="ChEBI" id="CHEBI:57455"/>
        <dbReference type="ChEBI" id="CHEBI:195366"/>
        <dbReference type="EC" id="3.5.4.9"/>
    </reaction>
</comment>
<comment type="pathway">
    <text evidence="1">One-carbon metabolism; tetrahydrofolate interconversion.</text>
</comment>
<comment type="subunit">
    <text evidence="1">Homodimer.</text>
</comment>
<comment type="similarity">
    <text evidence="1">Belongs to the tetrahydrofolate dehydrogenase/cyclohydrolase family.</text>
</comment>